<evidence type="ECO:0000255" key="1">
    <source>
        <dbReference type="HAMAP-Rule" id="MF_00379"/>
    </source>
</evidence>
<sequence>MKQTTIAAIATAIVPQQGSIGIVRLSGVEAVSIAKQLFQTPGKQQWESHRVLYGYIQQPLTQQIIDEGLLLLMLAPRSYTREDVVEFHCHGGMIAVQQVLEACLQAGAELAQPGEFTLRAFLNGRLDLTQAEGVADLVGARSPQAAQAALAGVQGKLASPIRELRQRCLDTLAEVEARVDFEDDLPPLDEAGVQAELQDIHATLQAILATADQGELLRNGLTVAIIGRPNVGKSSLLNAWCRCDRAIVTDLPGTTRDVVESQLVVGGIPIQVLDTAGIRETEDQVEQIGVTRSHQAAQSADLVLLTIDASVGWTSDDQQLYQAFQDLPLILIVNKVDLVPQEQVVYPEAIAQVVSTIAAQNQGISELETAILETVQTQSLKAANLDWAINQRQAAALQKAQAALEHVQGAIADQLPLDFWTIDLRGAIQALGEITGEDITESVLDRIFSRFCIGK</sequence>
<keyword id="KW-0963">Cytoplasm</keyword>
<keyword id="KW-0342">GTP-binding</keyword>
<keyword id="KW-0378">Hydrolase</keyword>
<keyword id="KW-0460">Magnesium</keyword>
<keyword id="KW-0479">Metal-binding</keyword>
<keyword id="KW-0547">Nucleotide-binding</keyword>
<keyword id="KW-0630">Potassium</keyword>
<keyword id="KW-1185">Reference proteome</keyword>
<keyword id="KW-0819">tRNA processing</keyword>
<feature type="chain" id="PRO_0000345692" description="tRNA modification GTPase MnmE">
    <location>
        <begin position="1"/>
        <end position="455"/>
    </location>
</feature>
<feature type="domain" description="TrmE-type G">
    <location>
        <begin position="220"/>
        <end position="376"/>
    </location>
</feature>
<feature type="binding site" evidence="1">
    <location>
        <position position="24"/>
    </location>
    <ligand>
        <name>(6S)-5-formyl-5,6,7,8-tetrahydrofolate</name>
        <dbReference type="ChEBI" id="CHEBI:57457"/>
    </ligand>
</feature>
<feature type="binding site" evidence="1">
    <location>
        <position position="86"/>
    </location>
    <ligand>
        <name>(6S)-5-formyl-5,6,7,8-tetrahydrofolate</name>
        <dbReference type="ChEBI" id="CHEBI:57457"/>
    </ligand>
</feature>
<feature type="binding site" evidence="1">
    <location>
        <position position="125"/>
    </location>
    <ligand>
        <name>(6S)-5-formyl-5,6,7,8-tetrahydrofolate</name>
        <dbReference type="ChEBI" id="CHEBI:57457"/>
    </ligand>
</feature>
<feature type="binding site" evidence="1">
    <location>
        <begin position="230"/>
        <end position="235"/>
    </location>
    <ligand>
        <name>GTP</name>
        <dbReference type="ChEBI" id="CHEBI:37565"/>
    </ligand>
</feature>
<feature type="binding site" evidence="1">
    <location>
        <position position="230"/>
    </location>
    <ligand>
        <name>K(+)</name>
        <dbReference type="ChEBI" id="CHEBI:29103"/>
    </ligand>
</feature>
<feature type="binding site" evidence="1">
    <location>
        <position position="234"/>
    </location>
    <ligand>
        <name>Mg(2+)</name>
        <dbReference type="ChEBI" id="CHEBI:18420"/>
    </ligand>
</feature>
<feature type="binding site" evidence="1">
    <location>
        <begin position="249"/>
        <end position="255"/>
    </location>
    <ligand>
        <name>GTP</name>
        <dbReference type="ChEBI" id="CHEBI:37565"/>
    </ligand>
</feature>
<feature type="binding site" evidence="1">
    <location>
        <position position="249"/>
    </location>
    <ligand>
        <name>K(+)</name>
        <dbReference type="ChEBI" id="CHEBI:29103"/>
    </ligand>
</feature>
<feature type="binding site" evidence="1">
    <location>
        <position position="251"/>
    </location>
    <ligand>
        <name>K(+)</name>
        <dbReference type="ChEBI" id="CHEBI:29103"/>
    </ligand>
</feature>
<feature type="binding site" evidence="1">
    <location>
        <position position="254"/>
    </location>
    <ligand>
        <name>K(+)</name>
        <dbReference type="ChEBI" id="CHEBI:29103"/>
    </ligand>
</feature>
<feature type="binding site" evidence="1">
    <location>
        <position position="255"/>
    </location>
    <ligand>
        <name>Mg(2+)</name>
        <dbReference type="ChEBI" id="CHEBI:18420"/>
    </ligand>
</feature>
<feature type="binding site" evidence="1">
    <location>
        <begin position="274"/>
        <end position="277"/>
    </location>
    <ligand>
        <name>GTP</name>
        <dbReference type="ChEBI" id="CHEBI:37565"/>
    </ligand>
</feature>
<feature type="binding site" evidence="1">
    <location>
        <position position="455"/>
    </location>
    <ligand>
        <name>(6S)-5-formyl-5,6,7,8-tetrahydrofolate</name>
        <dbReference type="ChEBI" id="CHEBI:57457"/>
    </ligand>
</feature>
<reference key="1">
    <citation type="journal article" date="2008" name="Proc. Natl. Acad. Sci. U.S.A.">
        <title>Niche adaptation and genome expansion in the chlorophyll d-producing cyanobacterium Acaryochloris marina.</title>
        <authorList>
            <person name="Swingley W.D."/>
            <person name="Chen M."/>
            <person name="Cheung P.C."/>
            <person name="Conrad A.L."/>
            <person name="Dejesa L.C."/>
            <person name="Hao J."/>
            <person name="Honchak B.M."/>
            <person name="Karbach L.E."/>
            <person name="Kurdoglu A."/>
            <person name="Lahiri S."/>
            <person name="Mastrian S.D."/>
            <person name="Miyashita H."/>
            <person name="Page L."/>
            <person name="Ramakrishna P."/>
            <person name="Satoh S."/>
            <person name="Sattley W.M."/>
            <person name="Shimada Y."/>
            <person name="Taylor H.L."/>
            <person name="Tomo T."/>
            <person name="Tsuchiya T."/>
            <person name="Wang Z.T."/>
            <person name="Raymond J."/>
            <person name="Mimuro M."/>
            <person name="Blankenship R.E."/>
            <person name="Touchman J.W."/>
        </authorList>
    </citation>
    <scope>NUCLEOTIDE SEQUENCE [LARGE SCALE GENOMIC DNA]</scope>
    <source>
        <strain>MBIC 11017</strain>
    </source>
</reference>
<proteinExistence type="inferred from homology"/>
<name>MNME_ACAM1</name>
<protein>
    <recommendedName>
        <fullName evidence="1">tRNA modification GTPase MnmE</fullName>
        <ecNumber evidence="1">3.6.-.-</ecNumber>
    </recommendedName>
</protein>
<accession>B0CBB0</accession>
<gene>
    <name evidence="1" type="primary">mnmE</name>
    <name evidence="1" type="synonym">trmE</name>
    <name type="ordered locus">AM1_1728</name>
</gene>
<organism>
    <name type="scientific">Acaryochloris marina (strain MBIC 11017)</name>
    <dbReference type="NCBI Taxonomy" id="329726"/>
    <lineage>
        <taxon>Bacteria</taxon>
        <taxon>Bacillati</taxon>
        <taxon>Cyanobacteriota</taxon>
        <taxon>Cyanophyceae</taxon>
        <taxon>Acaryochloridales</taxon>
        <taxon>Acaryochloridaceae</taxon>
        <taxon>Acaryochloris</taxon>
    </lineage>
</organism>
<comment type="function">
    <text evidence="1">Exhibits a very high intrinsic GTPase hydrolysis rate. Involved in the addition of a carboxymethylaminomethyl (cmnm) group at the wobble position (U34) of certain tRNAs, forming tRNA-cmnm(5)s(2)U34.</text>
</comment>
<comment type="cofactor">
    <cofactor evidence="1">
        <name>K(+)</name>
        <dbReference type="ChEBI" id="CHEBI:29103"/>
    </cofactor>
    <text evidence="1">Binds 1 potassium ion per subunit.</text>
</comment>
<comment type="subunit">
    <text evidence="1">Homodimer. Heterotetramer of two MnmE and two MnmG subunits.</text>
</comment>
<comment type="subcellular location">
    <subcellularLocation>
        <location evidence="1">Cytoplasm</location>
    </subcellularLocation>
</comment>
<comment type="similarity">
    <text evidence="1">Belongs to the TRAFAC class TrmE-Era-EngA-EngB-Septin-like GTPase superfamily. TrmE GTPase family.</text>
</comment>
<dbReference type="EC" id="3.6.-.-" evidence="1"/>
<dbReference type="EMBL" id="CP000828">
    <property type="protein sequence ID" value="ABW26749.1"/>
    <property type="molecule type" value="Genomic_DNA"/>
</dbReference>
<dbReference type="RefSeq" id="WP_012162266.1">
    <property type="nucleotide sequence ID" value="NC_009925.1"/>
</dbReference>
<dbReference type="SMR" id="B0CBB0"/>
<dbReference type="STRING" id="329726.AM1_1728"/>
<dbReference type="KEGG" id="amr:AM1_1728"/>
<dbReference type="eggNOG" id="COG0486">
    <property type="taxonomic scope" value="Bacteria"/>
</dbReference>
<dbReference type="HOGENOM" id="CLU_019624_4_1_3"/>
<dbReference type="OrthoDB" id="9805918at2"/>
<dbReference type="Proteomes" id="UP000000268">
    <property type="component" value="Chromosome"/>
</dbReference>
<dbReference type="GO" id="GO:0005829">
    <property type="term" value="C:cytosol"/>
    <property type="evidence" value="ECO:0007669"/>
    <property type="project" value="TreeGrafter"/>
</dbReference>
<dbReference type="GO" id="GO:0005525">
    <property type="term" value="F:GTP binding"/>
    <property type="evidence" value="ECO:0007669"/>
    <property type="project" value="UniProtKB-UniRule"/>
</dbReference>
<dbReference type="GO" id="GO:0003924">
    <property type="term" value="F:GTPase activity"/>
    <property type="evidence" value="ECO:0007669"/>
    <property type="project" value="UniProtKB-UniRule"/>
</dbReference>
<dbReference type="GO" id="GO:0046872">
    <property type="term" value="F:metal ion binding"/>
    <property type="evidence" value="ECO:0007669"/>
    <property type="project" value="UniProtKB-KW"/>
</dbReference>
<dbReference type="GO" id="GO:0030488">
    <property type="term" value="P:tRNA methylation"/>
    <property type="evidence" value="ECO:0007669"/>
    <property type="project" value="TreeGrafter"/>
</dbReference>
<dbReference type="GO" id="GO:0002098">
    <property type="term" value="P:tRNA wobble uridine modification"/>
    <property type="evidence" value="ECO:0007669"/>
    <property type="project" value="TreeGrafter"/>
</dbReference>
<dbReference type="CDD" id="cd04164">
    <property type="entry name" value="trmE"/>
    <property type="match status" value="1"/>
</dbReference>
<dbReference type="CDD" id="cd14858">
    <property type="entry name" value="TrmE_N"/>
    <property type="match status" value="1"/>
</dbReference>
<dbReference type="FunFam" id="3.30.1360.120:FF:000003">
    <property type="entry name" value="tRNA modification GTPase MnmE"/>
    <property type="match status" value="1"/>
</dbReference>
<dbReference type="FunFam" id="3.40.50.300:FF:000494">
    <property type="entry name" value="tRNA modification GTPase MnmE"/>
    <property type="match status" value="1"/>
</dbReference>
<dbReference type="Gene3D" id="3.40.50.300">
    <property type="entry name" value="P-loop containing nucleotide triphosphate hydrolases"/>
    <property type="match status" value="1"/>
</dbReference>
<dbReference type="Gene3D" id="3.30.1360.120">
    <property type="entry name" value="Probable tRNA modification gtpase trme, domain 1"/>
    <property type="match status" value="1"/>
</dbReference>
<dbReference type="Gene3D" id="1.20.120.430">
    <property type="entry name" value="tRNA modification GTPase MnmE domain 2"/>
    <property type="match status" value="1"/>
</dbReference>
<dbReference type="HAMAP" id="MF_00379">
    <property type="entry name" value="GTPase_MnmE"/>
    <property type="match status" value="1"/>
</dbReference>
<dbReference type="InterPro" id="IPR031168">
    <property type="entry name" value="G_TrmE"/>
</dbReference>
<dbReference type="InterPro" id="IPR006073">
    <property type="entry name" value="GTP-bd"/>
</dbReference>
<dbReference type="InterPro" id="IPR018948">
    <property type="entry name" value="GTP-bd_TrmE_N"/>
</dbReference>
<dbReference type="InterPro" id="IPR004520">
    <property type="entry name" value="GTPase_MnmE"/>
</dbReference>
<dbReference type="InterPro" id="IPR027368">
    <property type="entry name" value="MnmE_dom2"/>
</dbReference>
<dbReference type="InterPro" id="IPR025867">
    <property type="entry name" value="MnmE_helical"/>
</dbReference>
<dbReference type="InterPro" id="IPR027417">
    <property type="entry name" value="P-loop_NTPase"/>
</dbReference>
<dbReference type="InterPro" id="IPR005225">
    <property type="entry name" value="Small_GTP-bd"/>
</dbReference>
<dbReference type="InterPro" id="IPR027266">
    <property type="entry name" value="TrmE/GcvT_dom1"/>
</dbReference>
<dbReference type="NCBIfam" id="TIGR00450">
    <property type="entry name" value="mnmE_trmE_thdF"/>
    <property type="match status" value="1"/>
</dbReference>
<dbReference type="NCBIfam" id="NF003661">
    <property type="entry name" value="PRK05291.1-3"/>
    <property type="match status" value="1"/>
</dbReference>
<dbReference type="NCBIfam" id="TIGR00231">
    <property type="entry name" value="small_GTP"/>
    <property type="match status" value="1"/>
</dbReference>
<dbReference type="PANTHER" id="PTHR42714">
    <property type="entry name" value="TRNA MODIFICATION GTPASE GTPBP3"/>
    <property type="match status" value="1"/>
</dbReference>
<dbReference type="PANTHER" id="PTHR42714:SF2">
    <property type="entry name" value="TRNA MODIFICATION GTPASE GTPBP3, MITOCHONDRIAL"/>
    <property type="match status" value="1"/>
</dbReference>
<dbReference type="Pfam" id="PF01926">
    <property type="entry name" value="MMR_HSR1"/>
    <property type="match status" value="1"/>
</dbReference>
<dbReference type="Pfam" id="PF12631">
    <property type="entry name" value="MnmE_helical"/>
    <property type="match status" value="1"/>
</dbReference>
<dbReference type="Pfam" id="PF10396">
    <property type="entry name" value="TrmE_N"/>
    <property type="match status" value="1"/>
</dbReference>
<dbReference type="PRINTS" id="PR00449">
    <property type="entry name" value="RASTRNSFRMNG"/>
</dbReference>
<dbReference type="SUPFAM" id="SSF52540">
    <property type="entry name" value="P-loop containing nucleoside triphosphate hydrolases"/>
    <property type="match status" value="1"/>
</dbReference>
<dbReference type="SUPFAM" id="SSF116878">
    <property type="entry name" value="TrmE connector domain"/>
    <property type="match status" value="1"/>
</dbReference>
<dbReference type="PROSITE" id="PS51709">
    <property type="entry name" value="G_TRME"/>
    <property type="match status" value="1"/>
</dbReference>